<proteinExistence type="evidence at protein level"/>
<keyword id="KW-0903">Direct protein sequencing</keyword>
<keyword id="KW-1015">Disulfide bond</keyword>
<keyword id="KW-0325">Glycoprotein</keyword>
<keyword id="KW-0646">Protease inhibitor</keyword>
<keyword id="KW-0677">Repeat</keyword>
<keyword id="KW-0964">Secreted</keyword>
<keyword id="KW-0722">Serine protease inhibitor</keyword>
<accession>P68381</accession>
<accession>P05612</accession>
<comment type="subcellular location">
    <subcellularLocation>
        <location>Secreted</location>
    </subcellularLocation>
</comment>
<comment type="domain">
    <text>Avian ovomucoid consists of three homologous, tandem Kazal family inhibitory domains.</text>
</comment>
<organism>
    <name type="scientific">Anthropoides virgo</name>
    <name type="common">Demoiselle crane</name>
    <name type="synonym">Grus virgo</name>
    <dbReference type="NCBI Taxonomy" id="9111"/>
    <lineage>
        <taxon>Eukaryota</taxon>
        <taxon>Metazoa</taxon>
        <taxon>Chordata</taxon>
        <taxon>Craniata</taxon>
        <taxon>Vertebrata</taxon>
        <taxon>Euteleostomi</taxon>
        <taxon>Archelosauria</taxon>
        <taxon>Archosauria</taxon>
        <taxon>Dinosauria</taxon>
        <taxon>Saurischia</taxon>
        <taxon>Theropoda</taxon>
        <taxon>Coelurosauria</taxon>
        <taxon>Aves</taxon>
        <taxon>Neognathae</taxon>
        <taxon>Neoaves</taxon>
        <taxon>Gruiformes</taxon>
        <taxon>Gruidae</taxon>
        <taxon>Anthropoides</taxon>
    </lineage>
</organism>
<dbReference type="PIR" id="F31439">
    <property type="entry name" value="F31439"/>
</dbReference>
<dbReference type="SMR" id="P68381"/>
<dbReference type="GO" id="GO:0005576">
    <property type="term" value="C:extracellular region"/>
    <property type="evidence" value="ECO:0007669"/>
    <property type="project" value="UniProtKB-SubCell"/>
</dbReference>
<dbReference type="GO" id="GO:0004867">
    <property type="term" value="F:serine-type endopeptidase inhibitor activity"/>
    <property type="evidence" value="ECO:0007669"/>
    <property type="project" value="UniProtKB-KW"/>
</dbReference>
<dbReference type="CDD" id="cd00104">
    <property type="entry name" value="KAZAL_FS"/>
    <property type="match status" value="1"/>
</dbReference>
<dbReference type="FunFam" id="3.30.60.30:FF:000037">
    <property type="entry name" value="Ovomucoid"/>
    <property type="match status" value="1"/>
</dbReference>
<dbReference type="Gene3D" id="3.30.60.30">
    <property type="match status" value="1"/>
</dbReference>
<dbReference type="InterPro" id="IPR051597">
    <property type="entry name" value="Bifunctional_prot_inhibitor"/>
</dbReference>
<dbReference type="InterPro" id="IPR002350">
    <property type="entry name" value="Kazal_dom"/>
</dbReference>
<dbReference type="InterPro" id="IPR036058">
    <property type="entry name" value="Kazal_dom_sf"/>
</dbReference>
<dbReference type="InterPro" id="IPR001239">
    <property type="entry name" value="Prot_inh_Kazal-m"/>
</dbReference>
<dbReference type="PANTHER" id="PTHR47729:SF1">
    <property type="entry name" value="OVOMUCOID-LIKE-RELATED"/>
    <property type="match status" value="1"/>
</dbReference>
<dbReference type="PANTHER" id="PTHR47729">
    <property type="entry name" value="SERINE PEPTIDASE INHIBITOR, KAZAL TYPE 2, TANDEM DUPLICATE 1-RELATED"/>
    <property type="match status" value="1"/>
</dbReference>
<dbReference type="Pfam" id="PF00050">
    <property type="entry name" value="Kazal_1"/>
    <property type="match status" value="1"/>
</dbReference>
<dbReference type="PRINTS" id="PR00290">
    <property type="entry name" value="KAZALINHBTR"/>
</dbReference>
<dbReference type="SMART" id="SM00280">
    <property type="entry name" value="KAZAL"/>
    <property type="match status" value="1"/>
</dbReference>
<dbReference type="SUPFAM" id="SSF100895">
    <property type="entry name" value="Kazal-type serine protease inhibitors"/>
    <property type="match status" value="1"/>
</dbReference>
<dbReference type="PROSITE" id="PS00282">
    <property type="entry name" value="KAZAL_1"/>
    <property type="match status" value="1"/>
</dbReference>
<dbReference type="PROSITE" id="PS51465">
    <property type="entry name" value="KAZAL_2"/>
    <property type="match status" value="1"/>
</dbReference>
<sequence>TATVDCSDYPKPACTLEYMPFCGSDSKTYSNKCNFCNAVVDSNGTLTLSHFGKC</sequence>
<feature type="chain" id="PRO_0000073062" description="Ovomucoid">
    <location>
        <begin position="1" status="less than"/>
        <end position="54" status="greater than"/>
    </location>
</feature>
<feature type="domain" description="Kazal-like" evidence="1">
    <location>
        <begin position="4"/>
        <end position="54"/>
    </location>
</feature>
<feature type="site" description="Reactive bond 3">
    <location>
        <begin position="16"/>
        <end position="17"/>
    </location>
</feature>
<feature type="glycosylation site" description="N-linked (GlcNAc...) asparagine">
    <location>
        <position position="43"/>
    </location>
</feature>
<feature type="disulfide bond">
    <location>
        <begin position="6"/>
        <end position="36"/>
    </location>
</feature>
<feature type="disulfide bond">
    <location>
        <begin position="14"/>
        <end position="33"/>
    </location>
</feature>
<feature type="disulfide bond">
    <location>
        <begin position="22"/>
        <end position="54"/>
    </location>
</feature>
<feature type="non-terminal residue">
    <location>
        <position position="1"/>
    </location>
</feature>
<feature type="non-terminal residue">
    <location>
        <position position="54"/>
    </location>
</feature>
<reference key="1">
    <citation type="journal article" date="1987" name="Biochemistry">
        <title>Ovomucoid third domains from 100 avian species: isolation, sequences, and hypervariability of enzyme-inhibitor contact residues.</title>
        <authorList>
            <person name="Laskowski M. Jr."/>
            <person name="Kato I."/>
            <person name="Ardelt W."/>
            <person name="Cook J."/>
            <person name="Denton A."/>
            <person name="Empie M.W."/>
            <person name="Kohr W.J."/>
            <person name="Park S.J."/>
            <person name="Parks K."/>
            <person name="Schatzley B.L."/>
            <person name="Schoenberger O.L."/>
            <person name="Tashiro M."/>
            <person name="Vichot G."/>
            <person name="Whatley H.E."/>
            <person name="Wieczorek A."/>
            <person name="Wieczorek M."/>
        </authorList>
    </citation>
    <scope>PROTEIN SEQUENCE</scope>
</reference>
<name>IOVO_ANTVI</name>
<evidence type="ECO:0000255" key="1">
    <source>
        <dbReference type="PROSITE-ProRule" id="PRU00798"/>
    </source>
</evidence>
<protein>
    <recommendedName>
        <fullName>Ovomucoid</fullName>
    </recommendedName>
</protein>